<keyword id="KW-0010">Activator</keyword>
<keyword id="KW-0238">DNA-binding</keyword>
<keyword id="KW-0804">Transcription</keyword>
<keyword id="KW-0805">Transcription regulation</keyword>
<evidence type="ECO:0000305" key="1"/>
<feature type="chain" id="PRO_0000105672" description="Mau operon transcriptional activator">
    <location>
        <begin position="1" status="less than"/>
        <end position="37"/>
    </location>
</feature>
<feature type="non-terminal residue">
    <location>
        <position position="1"/>
    </location>
</feature>
<sequence length="37" mass="4313">LQVSRDVWLLSQPHLRDDHHAKQLSDWCVSLFAARSP</sequence>
<dbReference type="EMBL" id="L36952">
    <property type="protein sequence ID" value="AAA85385.1"/>
    <property type="molecule type" value="mRNA"/>
</dbReference>
<dbReference type="eggNOG" id="COG0583">
    <property type="taxonomic scope" value="Bacteria"/>
</dbReference>
<dbReference type="GO" id="GO:0003677">
    <property type="term" value="F:DNA binding"/>
    <property type="evidence" value="ECO:0007669"/>
    <property type="project" value="UniProtKB-KW"/>
</dbReference>
<name>MAUR_PARVE</name>
<organism>
    <name type="scientific">Paracoccus versutus</name>
    <name type="common">Thiobacillus versutus</name>
    <dbReference type="NCBI Taxonomy" id="34007"/>
    <lineage>
        <taxon>Bacteria</taxon>
        <taxon>Pseudomonadati</taxon>
        <taxon>Pseudomonadota</taxon>
        <taxon>Alphaproteobacteria</taxon>
        <taxon>Rhodobacterales</taxon>
        <taxon>Paracoccaceae</taxon>
        <taxon>Paracoccus</taxon>
    </lineage>
</organism>
<gene>
    <name type="primary">mauR</name>
</gene>
<reference key="1">
    <citation type="submission" date="1996-01" db="EMBL/GenBank/DDBJ databases">
        <authorList>
            <person name="Huitema F."/>
            <person name="Duine J.A."/>
            <person name="Canters G.W."/>
        </authorList>
    </citation>
    <scope>NUCLEOTIDE SEQUENCE [MRNA]</scope>
</reference>
<accession>Q56462</accession>
<protein>
    <recommendedName>
        <fullName>Mau operon transcriptional activator</fullName>
    </recommendedName>
</protein>
<proteinExistence type="evidence at transcript level"/>
<comment type="function">
    <text>Transcriptional activator of the mau genes involved in methylamine metabolism.</text>
</comment>
<comment type="similarity">
    <text evidence="1">Belongs to the LysR transcriptional regulatory family.</text>
</comment>